<dbReference type="EMBL" id="EU189132">
    <property type="protein sequence ID" value="ABW83700.1"/>
    <property type="molecule type" value="Genomic_DNA"/>
</dbReference>
<dbReference type="RefSeq" id="YP_001542536.1">
    <property type="nucleotide sequence ID" value="NC_009963.1"/>
</dbReference>
<dbReference type="SMR" id="A8W3C9"/>
<dbReference type="GeneID" id="5729641"/>
<dbReference type="GO" id="GO:0009539">
    <property type="term" value="C:photosystem II reaction center"/>
    <property type="evidence" value="ECO:0007669"/>
    <property type="project" value="InterPro"/>
</dbReference>
<dbReference type="GO" id="GO:0042170">
    <property type="term" value="C:plastid membrane"/>
    <property type="evidence" value="ECO:0007669"/>
    <property type="project" value="UniProtKB-SubCell"/>
</dbReference>
<dbReference type="GO" id="GO:0042651">
    <property type="term" value="C:thylakoid membrane"/>
    <property type="evidence" value="ECO:0007669"/>
    <property type="project" value="UniProtKB-UniRule"/>
</dbReference>
<dbReference type="GO" id="GO:0015979">
    <property type="term" value="P:photosynthesis"/>
    <property type="evidence" value="ECO:0007669"/>
    <property type="project" value="UniProtKB-UniRule"/>
</dbReference>
<dbReference type="HAMAP" id="MF_01317">
    <property type="entry name" value="PSII_PsbL"/>
    <property type="match status" value="1"/>
</dbReference>
<dbReference type="InterPro" id="IPR003372">
    <property type="entry name" value="PSII_PsbL"/>
</dbReference>
<dbReference type="InterPro" id="IPR037266">
    <property type="entry name" value="PSII_PsbL_sf"/>
</dbReference>
<dbReference type="NCBIfam" id="NF001972">
    <property type="entry name" value="PRK00753.1"/>
    <property type="match status" value="1"/>
</dbReference>
<dbReference type="Pfam" id="PF02419">
    <property type="entry name" value="PsbL"/>
    <property type="match status" value="1"/>
</dbReference>
<dbReference type="SUPFAM" id="SSF161017">
    <property type="entry name" value="Photosystem II reaction center protein L, PsbL"/>
    <property type="match status" value="1"/>
</dbReference>
<proteinExistence type="inferred from homology"/>
<comment type="function">
    <text evidence="1">One of the components of the core complex of photosystem II (PSII). PSII is a light-driven water:plastoquinone oxidoreductase that uses light energy to abstract electrons from H(2)O, generating O(2) and a proton gradient subsequently used for ATP formation. It consists of a core antenna complex that captures photons, and an electron transfer chain that converts photonic excitation into a charge separation. This subunit is found at the monomer-monomer interface and is required for correct PSII assembly and/or dimerization.</text>
</comment>
<comment type="subunit">
    <text evidence="1">PSII is composed of 1 copy each of membrane proteins PsbA, PsbB, PsbC, PsbD, PsbE, PsbF, PsbH, PsbI, PsbJ, PsbK, PsbL, PsbM, PsbT, PsbX, PsbY, PsbZ, Psb30/Ycf12, at least 3 peripheral proteins of the oxygen-evolving complex and a large number of cofactors. It forms dimeric complexes.</text>
</comment>
<comment type="subcellular location">
    <subcellularLocation>
        <location evidence="2">Plastid membrane</location>
        <topology evidence="1">Single-pass membrane protein</topology>
    </subcellularLocation>
</comment>
<comment type="similarity">
    <text evidence="1">Belongs to the PsbL family.</text>
</comment>
<comment type="caution">
    <text evidence="2">Young tissue from this organism is photosynthetic and contains some thylakoids, although the photosynthetic activity does not exceed the light compensation point.</text>
</comment>
<sequence length="38" mass="4497">MTQSNPNEQNVELNRTSLYWGLLLIFVLAVLFSNYFFN</sequence>
<gene>
    <name evidence="1" type="primary">psbL</name>
</gene>
<evidence type="ECO:0000255" key="1">
    <source>
        <dbReference type="HAMAP-Rule" id="MF_01317"/>
    </source>
</evidence>
<evidence type="ECO:0000305" key="2"/>
<geneLocation type="plastid"/>
<protein>
    <recommendedName>
        <fullName evidence="1">Photosystem II reaction center protein L</fullName>
        <shortName evidence="1">PSII-L</shortName>
    </recommendedName>
</protein>
<name>PSBL_CUSEX</name>
<accession>A8W3C9</accession>
<keyword id="KW-0472">Membrane</keyword>
<keyword id="KW-0602">Photosynthesis</keyword>
<keyword id="KW-0604">Photosystem II</keyword>
<keyword id="KW-0934">Plastid</keyword>
<keyword id="KW-0674">Reaction center</keyword>
<keyword id="KW-0812">Transmembrane</keyword>
<keyword id="KW-1133">Transmembrane helix</keyword>
<feature type="chain" id="PRO_0000353254" description="Photosystem II reaction center protein L">
    <location>
        <begin position="1"/>
        <end position="38"/>
    </location>
</feature>
<feature type="transmembrane region" description="Helical" evidence="1">
    <location>
        <begin position="17"/>
        <end position="37"/>
    </location>
</feature>
<reference key="1">
    <citation type="journal article" date="2007" name="BMC Plant Biol.">
        <title>Complete plastid genome sequences suggest strong selection for retention of photosynthetic genes in the parasitic plant genus Cuscuta.</title>
        <authorList>
            <person name="McNeal J.R."/>
            <person name="Kuehl J.V."/>
            <person name="Boore J.L."/>
            <person name="dePamphilis C.W."/>
        </authorList>
    </citation>
    <scope>NUCLEOTIDE SEQUENCE [LARGE SCALE GENOMIC DNA]</scope>
</reference>
<organism>
    <name type="scientific">Cuscuta exaltata</name>
    <name type="common">Tall dodder</name>
    <dbReference type="NCBI Taxonomy" id="476139"/>
    <lineage>
        <taxon>Eukaryota</taxon>
        <taxon>Viridiplantae</taxon>
        <taxon>Streptophyta</taxon>
        <taxon>Embryophyta</taxon>
        <taxon>Tracheophyta</taxon>
        <taxon>Spermatophyta</taxon>
        <taxon>Magnoliopsida</taxon>
        <taxon>eudicotyledons</taxon>
        <taxon>Gunneridae</taxon>
        <taxon>Pentapetalae</taxon>
        <taxon>asterids</taxon>
        <taxon>lamiids</taxon>
        <taxon>Solanales</taxon>
        <taxon>Convolvulaceae</taxon>
        <taxon>Cuscuteae</taxon>
        <taxon>Cuscuta</taxon>
        <taxon>Cuscuta subgen. Monogynella</taxon>
    </lineage>
</organism>